<keyword id="KW-0687">Ribonucleoprotein</keyword>
<keyword id="KW-0689">Ribosomal protein</keyword>
<keyword id="KW-0694">RNA-binding</keyword>
<keyword id="KW-0699">rRNA-binding</keyword>
<feature type="chain" id="PRO_0000233414" description="Small ribosomal subunit protein uS17">
    <location>
        <begin position="1"/>
        <end position="81"/>
    </location>
</feature>
<protein>
    <recommendedName>
        <fullName evidence="1">Small ribosomal subunit protein uS17</fullName>
    </recommendedName>
    <alternativeName>
        <fullName evidence="2">30S ribosomal protein S17</fullName>
    </alternativeName>
</protein>
<gene>
    <name evidence="1" type="primary">rpsQ</name>
    <name evidence="1" type="synonym">rps17</name>
    <name type="ordered locus">Ava_0700</name>
</gene>
<dbReference type="EMBL" id="CP000117">
    <property type="protein sequence ID" value="ABA20324.1"/>
    <property type="molecule type" value="Genomic_DNA"/>
</dbReference>
<dbReference type="RefSeq" id="WP_010998344.1">
    <property type="nucleotide sequence ID" value="NC_007413.1"/>
</dbReference>
<dbReference type="SMR" id="Q3MFB2"/>
<dbReference type="STRING" id="240292.Ava_0700"/>
<dbReference type="GeneID" id="58723358"/>
<dbReference type="KEGG" id="ava:Ava_0700"/>
<dbReference type="eggNOG" id="COG0186">
    <property type="taxonomic scope" value="Bacteria"/>
</dbReference>
<dbReference type="HOGENOM" id="CLU_073626_1_2_3"/>
<dbReference type="Proteomes" id="UP000002533">
    <property type="component" value="Chromosome"/>
</dbReference>
<dbReference type="GO" id="GO:0022627">
    <property type="term" value="C:cytosolic small ribosomal subunit"/>
    <property type="evidence" value="ECO:0007669"/>
    <property type="project" value="TreeGrafter"/>
</dbReference>
<dbReference type="GO" id="GO:0019843">
    <property type="term" value="F:rRNA binding"/>
    <property type="evidence" value="ECO:0007669"/>
    <property type="project" value="UniProtKB-UniRule"/>
</dbReference>
<dbReference type="GO" id="GO:0003735">
    <property type="term" value="F:structural constituent of ribosome"/>
    <property type="evidence" value="ECO:0007669"/>
    <property type="project" value="InterPro"/>
</dbReference>
<dbReference type="GO" id="GO:0006412">
    <property type="term" value="P:translation"/>
    <property type="evidence" value="ECO:0007669"/>
    <property type="project" value="UniProtKB-UniRule"/>
</dbReference>
<dbReference type="CDD" id="cd00364">
    <property type="entry name" value="Ribosomal_uS17"/>
    <property type="match status" value="1"/>
</dbReference>
<dbReference type="FunFam" id="2.40.50.140:FF:000123">
    <property type="entry name" value="30S ribosomal protein S17"/>
    <property type="match status" value="1"/>
</dbReference>
<dbReference type="Gene3D" id="2.40.50.140">
    <property type="entry name" value="Nucleic acid-binding proteins"/>
    <property type="match status" value="1"/>
</dbReference>
<dbReference type="HAMAP" id="MF_01345_B">
    <property type="entry name" value="Ribosomal_uS17_B"/>
    <property type="match status" value="1"/>
</dbReference>
<dbReference type="InterPro" id="IPR012340">
    <property type="entry name" value="NA-bd_OB-fold"/>
</dbReference>
<dbReference type="InterPro" id="IPR000266">
    <property type="entry name" value="Ribosomal_uS17"/>
</dbReference>
<dbReference type="InterPro" id="IPR019984">
    <property type="entry name" value="Ribosomal_uS17_bact/chlr"/>
</dbReference>
<dbReference type="InterPro" id="IPR019979">
    <property type="entry name" value="Ribosomal_uS17_CS"/>
</dbReference>
<dbReference type="NCBIfam" id="NF004123">
    <property type="entry name" value="PRK05610.1"/>
    <property type="match status" value="1"/>
</dbReference>
<dbReference type="NCBIfam" id="TIGR03635">
    <property type="entry name" value="uS17_bact"/>
    <property type="match status" value="1"/>
</dbReference>
<dbReference type="PANTHER" id="PTHR10744">
    <property type="entry name" value="40S RIBOSOMAL PROTEIN S11 FAMILY MEMBER"/>
    <property type="match status" value="1"/>
</dbReference>
<dbReference type="PANTHER" id="PTHR10744:SF1">
    <property type="entry name" value="SMALL RIBOSOMAL SUBUNIT PROTEIN US17M"/>
    <property type="match status" value="1"/>
</dbReference>
<dbReference type="Pfam" id="PF00366">
    <property type="entry name" value="Ribosomal_S17"/>
    <property type="match status" value="1"/>
</dbReference>
<dbReference type="PRINTS" id="PR00973">
    <property type="entry name" value="RIBOSOMALS17"/>
</dbReference>
<dbReference type="SUPFAM" id="SSF50249">
    <property type="entry name" value="Nucleic acid-binding proteins"/>
    <property type="match status" value="1"/>
</dbReference>
<dbReference type="PROSITE" id="PS00056">
    <property type="entry name" value="RIBOSOMAL_S17"/>
    <property type="match status" value="1"/>
</dbReference>
<evidence type="ECO:0000255" key="1">
    <source>
        <dbReference type="HAMAP-Rule" id="MF_01345"/>
    </source>
</evidence>
<evidence type="ECO:0000305" key="2"/>
<comment type="function">
    <text evidence="1">One of the primary rRNA binding proteins, it binds specifically to the 5'-end of 16S ribosomal RNA.</text>
</comment>
<comment type="subunit">
    <text evidence="1">Part of the 30S ribosomal subunit.</text>
</comment>
<comment type="similarity">
    <text evidence="1">Belongs to the universal ribosomal protein uS17 family.</text>
</comment>
<proteinExistence type="inferred from homology"/>
<reference key="1">
    <citation type="journal article" date="2014" name="Stand. Genomic Sci.">
        <title>Complete genome sequence of Anabaena variabilis ATCC 29413.</title>
        <authorList>
            <person name="Thiel T."/>
            <person name="Pratte B.S."/>
            <person name="Zhong J."/>
            <person name="Goodwin L."/>
            <person name="Copeland A."/>
            <person name="Lucas S."/>
            <person name="Han C."/>
            <person name="Pitluck S."/>
            <person name="Land M.L."/>
            <person name="Kyrpides N.C."/>
            <person name="Woyke T."/>
        </authorList>
    </citation>
    <scope>NUCLEOTIDE SEQUENCE [LARGE SCALE GENOMIC DNA]</scope>
    <source>
        <strain>ATCC 29413 / PCC 7937</strain>
    </source>
</reference>
<name>RS17_TRIV2</name>
<accession>Q3MFB2</accession>
<sequence length="81" mass="9355">MAIKERVGLVVSDKMQKTVVVAIENRAPHPKYGKIVVKTRRYKAHDEDNKCKVGDRVRIQETRPLSKTKRWQVAEILNTKA</sequence>
<organism>
    <name type="scientific">Trichormus variabilis (strain ATCC 29413 / PCC 7937)</name>
    <name type="common">Anabaena variabilis</name>
    <dbReference type="NCBI Taxonomy" id="240292"/>
    <lineage>
        <taxon>Bacteria</taxon>
        <taxon>Bacillati</taxon>
        <taxon>Cyanobacteriota</taxon>
        <taxon>Cyanophyceae</taxon>
        <taxon>Nostocales</taxon>
        <taxon>Nostocaceae</taxon>
        <taxon>Trichormus</taxon>
    </lineage>
</organism>